<organism>
    <name type="scientific">Arabidopsis thaliana</name>
    <name type="common">Mouse-ear cress</name>
    <dbReference type="NCBI Taxonomy" id="3702"/>
    <lineage>
        <taxon>Eukaryota</taxon>
        <taxon>Viridiplantae</taxon>
        <taxon>Streptophyta</taxon>
        <taxon>Embryophyta</taxon>
        <taxon>Tracheophyta</taxon>
        <taxon>Spermatophyta</taxon>
        <taxon>Magnoliopsida</taxon>
        <taxon>eudicotyledons</taxon>
        <taxon>Gunneridae</taxon>
        <taxon>Pentapetalae</taxon>
        <taxon>rosids</taxon>
        <taxon>malvids</taxon>
        <taxon>Brassicales</taxon>
        <taxon>Brassicaceae</taxon>
        <taxon>Camelineae</taxon>
        <taxon>Arabidopsis</taxon>
    </lineage>
</organism>
<feature type="initiator methionine" description="Removed" evidence="6">
    <location>
        <position position="1"/>
    </location>
</feature>
<feature type="chain" id="PRO_0000420150" description="NADP-dependent malic enzyme 2">
    <location>
        <begin position="2"/>
        <end position="588"/>
    </location>
</feature>
<feature type="region of interest" description="Disordered" evidence="2">
    <location>
        <begin position="1"/>
        <end position="21"/>
    </location>
</feature>
<feature type="active site" description="Proton donor" evidence="1">
    <location>
        <position position="136"/>
    </location>
</feature>
<feature type="active site" description="Proton acceptor" evidence="1">
    <location>
        <position position="207"/>
    </location>
</feature>
<feature type="binding site" evidence="1">
    <location>
        <position position="189"/>
    </location>
    <ligand>
        <name>NADP(+)</name>
        <dbReference type="ChEBI" id="CHEBI:58349"/>
    </ligand>
</feature>
<feature type="binding site" evidence="1">
    <location>
        <position position="279"/>
    </location>
    <ligand>
        <name>a divalent metal cation</name>
        <dbReference type="ChEBI" id="CHEBI:60240"/>
    </ligand>
</feature>
<feature type="binding site" evidence="1">
    <location>
        <position position="280"/>
    </location>
    <ligand>
        <name>a divalent metal cation</name>
        <dbReference type="ChEBI" id="CHEBI:60240"/>
    </ligand>
</feature>
<feature type="binding site" evidence="1">
    <location>
        <position position="303"/>
    </location>
    <ligand>
        <name>a divalent metal cation</name>
        <dbReference type="ChEBI" id="CHEBI:60240"/>
    </ligand>
</feature>
<feature type="binding site" evidence="1">
    <location>
        <position position="303"/>
    </location>
    <ligand>
        <name>NADP(+)</name>
        <dbReference type="ChEBI" id="CHEBI:58349"/>
    </ligand>
</feature>
<feature type="binding site" evidence="1">
    <location>
        <begin position="332"/>
        <end position="348"/>
    </location>
    <ligand>
        <name>NADP(+)</name>
        <dbReference type="ChEBI" id="CHEBI:58349"/>
    </ligand>
</feature>
<feature type="binding site" evidence="1">
    <location>
        <position position="444"/>
    </location>
    <ligand>
        <name>NADP(+)</name>
        <dbReference type="ChEBI" id="CHEBI:58349"/>
    </ligand>
</feature>
<feature type="site" description="Important for activity" evidence="1">
    <location>
        <position position="303"/>
    </location>
</feature>
<feature type="modified residue" description="N-acetylglycine" evidence="6">
    <location>
        <position position="2"/>
    </location>
</feature>
<name>MAOP2_ARATH</name>
<protein>
    <recommendedName>
        <fullName>NADP-dependent malic enzyme 2</fullName>
        <shortName>AtNADP-ME2</shortName>
        <shortName>NADP-malic enzyme 2</shortName>
        <ecNumber>1.1.1.40</ecNumber>
    </recommendedName>
</protein>
<gene>
    <name type="primary">NADP-ME2</name>
    <name type="ordered locus">At5g11670</name>
    <name type="ORF">T22P22.60</name>
</gene>
<sequence length="588" mass="64413">MGSTPTDLPGEDVADNRSGVGGGISDVYGEDSATLDQLVTPWVTSVASGYTLMRDPRYNKGLAFTDKERDAHYLTGLLPPVILSQDVQERKVMHNLRQYTVPLQRYMALMDLQERNERLFYKLLIDNVEELLPVVYTPTVGEACQKYGSIFRKPQGLYISLNEKGKILEVLKNWPQRGIQVIVVTDGERILGLGDLGCQGMGIPVGKLSLYTALGGIRPSACLPITIDVGTNNEKLLNDEFYIGLKQRRATGQEYAEFLHEFMCAVKQNYGEKVLVQFEDFANHNAFDLLSKYSDSHLVFNDDIQGTASVVLAGLIAAQKVLGKKLADHTFLFLGAGEAGTGIAELIALKISKETGAPITETRKKIWLVDSKGLIVSSRKESLQHFKQPWAHEHKPVKDLIGAVNAIKPTVLIGTSGVGQTFTKEVVEAMATNNEKPLILALSNPTSQAECTAEQAYTWTKGRAIFGSGSPFDPVVYDGKTYLPGQANNCYIFPGLGLGLIMSGAIRVRDDMLLAASEALAAQVTEEHYANGLIYPPFSNIREISANIAACVAAKTYDLGLASNLPRAKDLVKFAESSMYSPVYRNYR</sequence>
<proteinExistence type="evidence at protein level"/>
<keyword id="KW-0007">Acetylation</keyword>
<keyword id="KW-0963">Cytoplasm</keyword>
<keyword id="KW-0479">Metal-binding</keyword>
<keyword id="KW-0521">NADP</keyword>
<keyword id="KW-0560">Oxidoreductase</keyword>
<keyword id="KW-1185">Reference proteome</keyword>
<reference key="1">
    <citation type="journal article" date="2000" name="Nature">
        <title>Sequence and analysis of chromosome 5 of the plant Arabidopsis thaliana.</title>
        <authorList>
            <person name="Tabata S."/>
            <person name="Kaneko T."/>
            <person name="Nakamura Y."/>
            <person name="Kotani H."/>
            <person name="Kato T."/>
            <person name="Asamizu E."/>
            <person name="Miyajima N."/>
            <person name="Sasamoto S."/>
            <person name="Kimura T."/>
            <person name="Hosouchi T."/>
            <person name="Kawashima K."/>
            <person name="Kohara M."/>
            <person name="Matsumoto M."/>
            <person name="Matsuno A."/>
            <person name="Muraki A."/>
            <person name="Nakayama S."/>
            <person name="Nakazaki N."/>
            <person name="Naruo K."/>
            <person name="Okumura S."/>
            <person name="Shinpo S."/>
            <person name="Takeuchi C."/>
            <person name="Wada T."/>
            <person name="Watanabe A."/>
            <person name="Yamada M."/>
            <person name="Yasuda M."/>
            <person name="Sato S."/>
            <person name="de la Bastide M."/>
            <person name="Huang E."/>
            <person name="Spiegel L."/>
            <person name="Gnoj L."/>
            <person name="O'Shaughnessy A."/>
            <person name="Preston R."/>
            <person name="Habermann K."/>
            <person name="Murray J."/>
            <person name="Johnson D."/>
            <person name="Rohlfing T."/>
            <person name="Nelson J."/>
            <person name="Stoneking T."/>
            <person name="Pepin K."/>
            <person name="Spieth J."/>
            <person name="Sekhon M."/>
            <person name="Armstrong J."/>
            <person name="Becker M."/>
            <person name="Belter E."/>
            <person name="Cordum H."/>
            <person name="Cordes M."/>
            <person name="Courtney L."/>
            <person name="Courtney W."/>
            <person name="Dante M."/>
            <person name="Du H."/>
            <person name="Edwards J."/>
            <person name="Fryman J."/>
            <person name="Haakensen B."/>
            <person name="Lamar E."/>
            <person name="Latreille P."/>
            <person name="Leonard S."/>
            <person name="Meyer R."/>
            <person name="Mulvaney E."/>
            <person name="Ozersky P."/>
            <person name="Riley A."/>
            <person name="Strowmatt C."/>
            <person name="Wagner-McPherson C."/>
            <person name="Wollam A."/>
            <person name="Yoakum M."/>
            <person name="Bell M."/>
            <person name="Dedhia N."/>
            <person name="Parnell L."/>
            <person name="Shah R."/>
            <person name="Rodriguez M."/>
            <person name="Hoon See L."/>
            <person name="Vil D."/>
            <person name="Baker J."/>
            <person name="Kirchoff K."/>
            <person name="Toth K."/>
            <person name="King L."/>
            <person name="Bahret A."/>
            <person name="Miller B."/>
            <person name="Marra M.A."/>
            <person name="Martienssen R."/>
            <person name="McCombie W.R."/>
            <person name="Wilson R.K."/>
            <person name="Murphy G."/>
            <person name="Bancroft I."/>
            <person name="Volckaert G."/>
            <person name="Wambutt R."/>
            <person name="Duesterhoeft A."/>
            <person name="Stiekema W."/>
            <person name="Pohl T."/>
            <person name="Entian K.-D."/>
            <person name="Terryn N."/>
            <person name="Hartley N."/>
            <person name="Bent E."/>
            <person name="Johnson S."/>
            <person name="Langham S.-A."/>
            <person name="McCullagh B."/>
            <person name="Robben J."/>
            <person name="Grymonprez B."/>
            <person name="Zimmermann W."/>
            <person name="Ramsperger U."/>
            <person name="Wedler H."/>
            <person name="Balke K."/>
            <person name="Wedler E."/>
            <person name="Peters S."/>
            <person name="van Staveren M."/>
            <person name="Dirkse W."/>
            <person name="Mooijman P."/>
            <person name="Klein Lankhorst R."/>
            <person name="Weitzenegger T."/>
            <person name="Bothe G."/>
            <person name="Rose M."/>
            <person name="Hauf J."/>
            <person name="Berneiser S."/>
            <person name="Hempel S."/>
            <person name="Feldpausch M."/>
            <person name="Lamberth S."/>
            <person name="Villarroel R."/>
            <person name="Gielen J."/>
            <person name="Ardiles W."/>
            <person name="Bents O."/>
            <person name="Lemcke K."/>
            <person name="Kolesov G."/>
            <person name="Mayer K.F.X."/>
            <person name="Rudd S."/>
            <person name="Schoof H."/>
            <person name="Schueller C."/>
            <person name="Zaccaria P."/>
            <person name="Mewes H.-W."/>
            <person name="Bevan M."/>
            <person name="Fransz P.F."/>
        </authorList>
    </citation>
    <scope>NUCLEOTIDE SEQUENCE [LARGE SCALE GENOMIC DNA]</scope>
    <source>
        <strain>cv. Columbia</strain>
    </source>
</reference>
<reference key="2">
    <citation type="journal article" date="2017" name="Plant J.">
        <title>Araport11: a complete reannotation of the Arabidopsis thaliana reference genome.</title>
        <authorList>
            <person name="Cheng C.Y."/>
            <person name="Krishnakumar V."/>
            <person name="Chan A.P."/>
            <person name="Thibaud-Nissen F."/>
            <person name="Schobel S."/>
            <person name="Town C.D."/>
        </authorList>
    </citation>
    <scope>GENOME REANNOTATION</scope>
    <source>
        <strain>cv. Columbia</strain>
    </source>
</reference>
<reference key="3">
    <citation type="journal article" date="2003" name="Science">
        <title>Empirical analysis of transcriptional activity in the Arabidopsis genome.</title>
        <authorList>
            <person name="Yamada K."/>
            <person name="Lim J."/>
            <person name="Dale J.M."/>
            <person name="Chen H."/>
            <person name="Shinn P."/>
            <person name="Palm C.J."/>
            <person name="Southwick A.M."/>
            <person name="Wu H.C."/>
            <person name="Kim C.J."/>
            <person name="Nguyen M."/>
            <person name="Pham P.K."/>
            <person name="Cheuk R.F."/>
            <person name="Karlin-Newmann G."/>
            <person name="Liu S.X."/>
            <person name="Lam B."/>
            <person name="Sakano H."/>
            <person name="Wu T."/>
            <person name="Yu G."/>
            <person name="Miranda M."/>
            <person name="Quach H.L."/>
            <person name="Tripp M."/>
            <person name="Chang C.H."/>
            <person name="Lee J.M."/>
            <person name="Toriumi M.J."/>
            <person name="Chan M.M."/>
            <person name="Tang C.C."/>
            <person name="Onodera C.S."/>
            <person name="Deng J.M."/>
            <person name="Akiyama K."/>
            <person name="Ansari Y."/>
            <person name="Arakawa T."/>
            <person name="Banh J."/>
            <person name="Banno F."/>
            <person name="Bowser L."/>
            <person name="Brooks S.Y."/>
            <person name="Carninci P."/>
            <person name="Chao Q."/>
            <person name="Choy N."/>
            <person name="Enju A."/>
            <person name="Goldsmith A.D."/>
            <person name="Gurjal M."/>
            <person name="Hansen N.F."/>
            <person name="Hayashizaki Y."/>
            <person name="Johnson-Hopson C."/>
            <person name="Hsuan V.W."/>
            <person name="Iida K."/>
            <person name="Karnes M."/>
            <person name="Khan S."/>
            <person name="Koesema E."/>
            <person name="Ishida J."/>
            <person name="Jiang P.X."/>
            <person name="Jones T."/>
            <person name="Kawai J."/>
            <person name="Kamiya A."/>
            <person name="Meyers C."/>
            <person name="Nakajima M."/>
            <person name="Narusaka M."/>
            <person name="Seki M."/>
            <person name="Sakurai T."/>
            <person name="Satou M."/>
            <person name="Tamse R."/>
            <person name="Vaysberg M."/>
            <person name="Wallender E.K."/>
            <person name="Wong C."/>
            <person name="Yamamura Y."/>
            <person name="Yuan S."/>
            <person name="Shinozaki K."/>
            <person name="Davis R.W."/>
            <person name="Theologis A."/>
            <person name="Ecker J.R."/>
        </authorList>
    </citation>
    <scope>NUCLEOTIDE SEQUENCE [LARGE SCALE MRNA]</scope>
    <source>
        <strain>cv. Columbia</strain>
    </source>
</reference>
<reference key="4">
    <citation type="journal article" date="2009" name="DNA Res.">
        <title>Analysis of multiple occurrences of alternative splicing events in Arabidopsis thaliana using novel sequenced full-length cDNAs.</title>
        <authorList>
            <person name="Iida K."/>
            <person name="Fukami-Kobayashi K."/>
            <person name="Toyoda A."/>
            <person name="Sakaki Y."/>
            <person name="Kobayashi M."/>
            <person name="Seki M."/>
            <person name="Shinozaki K."/>
        </authorList>
    </citation>
    <scope>NUCLEOTIDE SEQUENCE [LARGE SCALE MRNA] OF 153-588</scope>
    <source>
        <strain>cv. Columbia</strain>
        <tissue>Flower</tissue>
        <tissue>Silique</tissue>
    </source>
</reference>
<reference key="5">
    <citation type="journal article" date="2005" name="Plant Physiol.">
        <title>A comprehensive analysis of the NADP-malic enzyme gene family of Arabidopsis.</title>
        <authorList>
            <person name="Wheeler M.C."/>
            <person name="Tronconi M.A."/>
            <person name="Drincovich M.F."/>
            <person name="Andreo C.S."/>
            <person name="Fluegge U.-I."/>
            <person name="Maurino V.G."/>
        </authorList>
    </citation>
    <scope>DEVELOPMENTAL STAGE</scope>
    <scope>TISSUE SPECIFICITY</scope>
    <scope>CATALYTIC ACTIVITY</scope>
    <scope>BIOPHYSICOCHEMICAL PROPERTIES</scope>
    <scope>SUBUNIT</scope>
    <scope>GENE FAMILY</scope>
    <scope>NOMENCLATURE</scope>
    <source>
        <strain>cv. Columbia</strain>
    </source>
</reference>
<reference key="6">
    <citation type="journal article" date="2009" name="FEBS J.">
        <title>Identification of domains involved in the allosteric regulation of cytosolic Arabidopsis thaliana NADP-malic enzymes.</title>
        <authorList>
            <person name="Gerrard Wheeler M.C."/>
            <person name="Arias C.L."/>
            <person name="Maurino V.G."/>
            <person name="Andreo C.S."/>
            <person name="Drincovich M.F."/>
        </authorList>
    </citation>
    <scope>SUBCELLULAR LOCATION</scope>
    <scope>ACTIVITY REGULATION</scope>
    <scope>BIOPHYSICOCHEMICAL PROPERTIES</scope>
</reference>
<reference key="7">
    <citation type="journal article" date="2009" name="Plant Physiol.">
        <title>Large-scale Arabidopsis phosphoproteome profiling reveals novel chloroplast kinase substrates and phosphorylation networks.</title>
        <authorList>
            <person name="Reiland S."/>
            <person name="Messerli G."/>
            <person name="Baerenfaller K."/>
            <person name="Gerrits B."/>
            <person name="Endler A."/>
            <person name="Grossmann J."/>
            <person name="Gruissem W."/>
            <person name="Baginsky S."/>
        </authorList>
    </citation>
    <scope>IDENTIFICATION BY MASS SPECTROMETRY [LARGE SCALE ANALYSIS]</scope>
</reference>
<reference key="8">
    <citation type="journal article" date="2012" name="Mol. Cell. Proteomics">
        <title>Comparative large-scale characterisation of plant vs. mammal proteins reveals similar and idiosyncratic N-alpha acetylation features.</title>
        <authorList>
            <person name="Bienvenut W.V."/>
            <person name="Sumpton D."/>
            <person name="Martinez A."/>
            <person name="Lilla S."/>
            <person name="Espagne C."/>
            <person name="Meinnel T."/>
            <person name="Giglione C."/>
        </authorList>
    </citation>
    <scope>ACETYLATION [LARGE SCALE ANALYSIS] AT GLY-2</scope>
    <scope>CLEAVAGE OF INITIATOR METHIONINE [LARGE SCALE ANALYSIS]</scope>
    <scope>IDENTIFICATION BY MASS SPECTROMETRY [LARGE SCALE ANALYSIS]</scope>
</reference>
<comment type="catalytic activity">
    <reaction evidence="3">
        <text>(S)-malate + NADP(+) = pyruvate + CO2 + NADPH</text>
        <dbReference type="Rhea" id="RHEA:18253"/>
        <dbReference type="ChEBI" id="CHEBI:15361"/>
        <dbReference type="ChEBI" id="CHEBI:15589"/>
        <dbReference type="ChEBI" id="CHEBI:16526"/>
        <dbReference type="ChEBI" id="CHEBI:57783"/>
        <dbReference type="ChEBI" id="CHEBI:58349"/>
        <dbReference type="EC" id="1.1.1.40"/>
    </reaction>
</comment>
<comment type="catalytic activity">
    <reaction evidence="3">
        <text>oxaloacetate + H(+) = pyruvate + CO2</text>
        <dbReference type="Rhea" id="RHEA:15641"/>
        <dbReference type="ChEBI" id="CHEBI:15361"/>
        <dbReference type="ChEBI" id="CHEBI:15378"/>
        <dbReference type="ChEBI" id="CHEBI:16452"/>
        <dbReference type="ChEBI" id="CHEBI:16526"/>
        <dbReference type="EC" id="1.1.1.40"/>
    </reaction>
</comment>
<comment type="cofactor">
    <cofactor evidence="1">
        <name>Mg(2+)</name>
        <dbReference type="ChEBI" id="CHEBI:18420"/>
    </cofactor>
    <cofactor evidence="1">
        <name>Mn(2+)</name>
        <dbReference type="ChEBI" id="CHEBI:29035"/>
    </cofactor>
    <text evidence="1">Divalent metal cations. Prefers magnesium or manganese.</text>
</comment>
<comment type="activity regulation">
    <text evidence="4">Activated by coenzyme A (CoA), aspartate, succinate and fumarate. Repressed by oxaloacetate, glucose and ATP.</text>
</comment>
<comment type="biophysicochemical properties">
    <kinetics>
        <KM evidence="3 4">72.1 uM for NADP (at pH 7.5)</KM>
        <KM evidence="3 4">3.33 mM for malate (at pH 7.5)</KM>
        <KM evidence="3 4">0.5 mM for pyruvate (at pH 7)</KM>
        <text>kcat is 324.1 sec(-1) with NADP and malate as substrates (at pH 7.5). kcat is 75 sec(-1) with pyruvate as substrate (at pH 7).</text>
    </kinetics>
    <phDependence>
        <text evidence="3 4">Optimum pH is 6.8.</text>
    </phDependence>
</comment>
<comment type="subunit">
    <text evidence="3">Homohexamers and homooctamers.</text>
</comment>
<comment type="subcellular location">
    <subcellularLocation>
        <location evidence="4">Cytoplasm</location>
    </subcellularLocation>
</comment>
<comment type="tissue specificity">
    <text evidence="3">Expressed in leaves, stems, flowers and roots. Particularly present in vasculatures, trichome basal cells and hydatodes.</text>
</comment>
<comment type="developmental stage">
    <text evidence="3">During embryogenesis, present in the embryo at the globular and heart stages. Detected in the funiculus and vascular tissues of the siliques. During germination, restricted to the proximal part of the radicle having root hairs to later expands toward the meristematic region, except for the root tip. Strongly expressed in hypocotyls and cotyledons 6 days after imbibition. Present in primary leaves. In developed flowers expressed in sepals and filaments. In developing siliques, present at both ends, the stigmatic papillae and the abscission zone.</text>
</comment>
<comment type="similarity">
    <text evidence="5">Belongs to the malic enzymes family.</text>
</comment>
<dbReference type="EC" id="1.1.1.40"/>
<dbReference type="EMBL" id="AL163814">
    <property type="protein sequence ID" value="CAB87685.1"/>
    <property type="molecule type" value="Genomic_DNA"/>
</dbReference>
<dbReference type="EMBL" id="CP002688">
    <property type="protein sequence ID" value="AED91708.1"/>
    <property type="molecule type" value="Genomic_DNA"/>
</dbReference>
<dbReference type="EMBL" id="AF428407">
    <property type="protein sequence ID" value="AAL16175.1"/>
    <property type="molecule type" value="mRNA"/>
</dbReference>
<dbReference type="EMBL" id="AK317577">
    <property type="protein sequence ID" value="BAH20241.1"/>
    <property type="molecule type" value="mRNA"/>
</dbReference>
<dbReference type="EMBL" id="AK317669">
    <property type="protein sequence ID" value="BAH20329.1"/>
    <property type="molecule type" value="mRNA"/>
</dbReference>
<dbReference type="PIR" id="T48526">
    <property type="entry name" value="T48526"/>
</dbReference>
<dbReference type="RefSeq" id="NP_196728.1">
    <property type="nucleotide sequence ID" value="NM_121205.4"/>
</dbReference>
<dbReference type="SMR" id="Q9LYG3"/>
<dbReference type="BioGRID" id="16317">
    <property type="interactions" value="4"/>
</dbReference>
<dbReference type="FunCoup" id="Q9LYG3">
    <property type="interactions" value="3041"/>
</dbReference>
<dbReference type="IntAct" id="Q9LYG3">
    <property type="interactions" value="2"/>
</dbReference>
<dbReference type="STRING" id="3702.Q9LYG3"/>
<dbReference type="iPTMnet" id="Q9LYG3"/>
<dbReference type="PaxDb" id="3702-AT5G11670.1"/>
<dbReference type="ProMEX" id="Q9LYG3"/>
<dbReference type="ProteomicsDB" id="250676"/>
<dbReference type="EnsemblPlants" id="AT5G11670.1">
    <property type="protein sequence ID" value="AT5G11670.1"/>
    <property type="gene ID" value="AT5G11670"/>
</dbReference>
<dbReference type="GeneID" id="831039"/>
<dbReference type="Gramene" id="AT5G11670.1">
    <property type="protein sequence ID" value="AT5G11670.1"/>
    <property type="gene ID" value="AT5G11670"/>
</dbReference>
<dbReference type="KEGG" id="ath:AT5G11670"/>
<dbReference type="Araport" id="AT5G11670"/>
<dbReference type="TAIR" id="AT5G11670">
    <property type="gene designation" value="NADP-ME2"/>
</dbReference>
<dbReference type="eggNOG" id="KOG1257">
    <property type="taxonomic scope" value="Eukaryota"/>
</dbReference>
<dbReference type="HOGENOM" id="CLU_011405_5_2_1"/>
<dbReference type="InParanoid" id="Q9LYG3"/>
<dbReference type="OMA" id="QIVNHMV"/>
<dbReference type="OrthoDB" id="5365701at2759"/>
<dbReference type="PhylomeDB" id="Q9LYG3"/>
<dbReference type="BioCyc" id="ARA:AT5G11670-MONOMER"/>
<dbReference type="BRENDA" id="1.1.1.40">
    <property type="organism ID" value="399"/>
</dbReference>
<dbReference type="SABIO-RK" id="Q9LYG3"/>
<dbReference type="CD-CODE" id="4299E36E">
    <property type="entry name" value="Nucleolus"/>
</dbReference>
<dbReference type="PRO" id="PR:Q9LYG3"/>
<dbReference type="Proteomes" id="UP000006548">
    <property type="component" value="Chromosome 5"/>
</dbReference>
<dbReference type="ExpressionAtlas" id="Q9LYG3">
    <property type="expression patterns" value="baseline and differential"/>
</dbReference>
<dbReference type="GO" id="GO:0048046">
    <property type="term" value="C:apoplast"/>
    <property type="evidence" value="ECO:0007005"/>
    <property type="project" value="TAIR"/>
</dbReference>
<dbReference type="GO" id="GO:0009507">
    <property type="term" value="C:chloroplast"/>
    <property type="evidence" value="ECO:0007005"/>
    <property type="project" value="TAIR"/>
</dbReference>
<dbReference type="GO" id="GO:0005829">
    <property type="term" value="C:cytosol"/>
    <property type="evidence" value="ECO:0000314"/>
    <property type="project" value="TAIR"/>
</dbReference>
<dbReference type="GO" id="GO:0009505">
    <property type="term" value="C:plant-type cell wall"/>
    <property type="evidence" value="ECO:0007005"/>
    <property type="project" value="TAIR"/>
</dbReference>
<dbReference type="GO" id="GO:0000325">
    <property type="term" value="C:plant-type vacuole"/>
    <property type="evidence" value="ECO:0007005"/>
    <property type="project" value="TAIR"/>
</dbReference>
<dbReference type="GO" id="GO:0005886">
    <property type="term" value="C:plasma membrane"/>
    <property type="evidence" value="ECO:0007005"/>
    <property type="project" value="TAIR"/>
</dbReference>
<dbReference type="GO" id="GO:0009506">
    <property type="term" value="C:plasmodesma"/>
    <property type="evidence" value="ECO:0007005"/>
    <property type="project" value="TAIR"/>
</dbReference>
<dbReference type="GO" id="GO:0004473">
    <property type="term" value="F:malate dehydrogenase (decarboxylating) (NADP+) activity"/>
    <property type="evidence" value="ECO:0000314"/>
    <property type="project" value="TAIR"/>
</dbReference>
<dbReference type="GO" id="GO:0046872">
    <property type="term" value="F:metal ion binding"/>
    <property type="evidence" value="ECO:0007669"/>
    <property type="project" value="UniProtKB-KW"/>
</dbReference>
<dbReference type="GO" id="GO:0051287">
    <property type="term" value="F:NAD binding"/>
    <property type="evidence" value="ECO:0007669"/>
    <property type="project" value="InterPro"/>
</dbReference>
<dbReference type="GO" id="GO:0008948">
    <property type="term" value="F:oxaloacetate decarboxylase activity"/>
    <property type="evidence" value="ECO:0007669"/>
    <property type="project" value="RHEA"/>
</dbReference>
<dbReference type="GO" id="GO:0006108">
    <property type="term" value="P:malate metabolic process"/>
    <property type="evidence" value="ECO:0000314"/>
    <property type="project" value="TAIR"/>
</dbReference>
<dbReference type="GO" id="GO:0009051">
    <property type="term" value="P:pentose-phosphate shunt, oxidative branch"/>
    <property type="evidence" value="ECO:0000304"/>
    <property type="project" value="TAIR"/>
</dbReference>
<dbReference type="GO" id="GO:0046686">
    <property type="term" value="P:response to cadmium ion"/>
    <property type="evidence" value="ECO:0000270"/>
    <property type="project" value="TAIR"/>
</dbReference>
<dbReference type="CDD" id="cd05312">
    <property type="entry name" value="NAD_bind_1_malic_enz"/>
    <property type="match status" value="1"/>
</dbReference>
<dbReference type="FunFam" id="3.40.50.10380:FF:000002">
    <property type="entry name" value="Malic enzyme"/>
    <property type="match status" value="1"/>
</dbReference>
<dbReference type="FunFam" id="3.40.50.720:FF:000067">
    <property type="entry name" value="Malic enzyme"/>
    <property type="match status" value="1"/>
</dbReference>
<dbReference type="Gene3D" id="3.40.50.10380">
    <property type="entry name" value="Malic enzyme, N-terminal domain"/>
    <property type="match status" value="1"/>
</dbReference>
<dbReference type="Gene3D" id="3.40.50.720">
    <property type="entry name" value="NAD(P)-binding Rossmann-like Domain"/>
    <property type="match status" value="1"/>
</dbReference>
<dbReference type="InterPro" id="IPR046346">
    <property type="entry name" value="Aminoacid_DH-like_N_sf"/>
</dbReference>
<dbReference type="InterPro" id="IPR015884">
    <property type="entry name" value="Malic_enzyme_CS"/>
</dbReference>
<dbReference type="InterPro" id="IPR012301">
    <property type="entry name" value="Malic_N_dom"/>
</dbReference>
<dbReference type="InterPro" id="IPR037062">
    <property type="entry name" value="Malic_N_dom_sf"/>
</dbReference>
<dbReference type="InterPro" id="IPR012302">
    <property type="entry name" value="Malic_NAD-bd"/>
</dbReference>
<dbReference type="InterPro" id="IPR001891">
    <property type="entry name" value="Malic_OxRdtase"/>
</dbReference>
<dbReference type="InterPro" id="IPR036291">
    <property type="entry name" value="NAD(P)-bd_dom_sf"/>
</dbReference>
<dbReference type="NCBIfam" id="NF010052">
    <property type="entry name" value="PRK13529.1"/>
    <property type="match status" value="1"/>
</dbReference>
<dbReference type="PANTHER" id="PTHR23406">
    <property type="entry name" value="MALIC ENZYME-RELATED"/>
    <property type="match status" value="1"/>
</dbReference>
<dbReference type="PANTHER" id="PTHR23406:SF70">
    <property type="entry name" value="NADP-DEPENDENT MALIC ENZYME 2"/>
    <property type="match status" value="1"/>
</dbReference>
<dbReference type="Pfam" id="PF00390">
    <property type="entry name" value="malic"/>
    <property type="match status" value="1"/>
</dbReference>
<dbReference type="Pfam" id="PF03949">
    <property type="entry name" value="Malic_M"/>
    <property type="match status" value="1"/>
</dbReference>
<dbReference type="PIRSF" id="PIRSF000106">
    <property type="entry name" value="ME"/>
    <property type="match status" value="1"/>
</dbReference>
<dbReference type="PRINTS" id="PR00072">
    <property type="entry name" value="MALOXRDTASE"/>
</dbReference>
<dbReference type="SMART" id="SM01274">
    <property type="entry name" value="malic"/>
    <property type="match status" value="1"/>
</dbReference>
<dbReference type="SMART" id="SM00919">
    <property type="entry name" value="Malic_M"/>
    <property type="match status" value="1"/>
</dbReference>
<dbReference type="SUPFAM" id="SSF53223">
    <property type="entry name" value="Aminoacid dehydrogenase-like, N-terminal domain"/>
    <property type="match status" value="1"/>
</dbReference>
<dbReference type="SUPFAM" id="SSF51735">
    <property type="entry name" value="NAD(P)-binding Rossmann-fold domains"/>
    <property type="match status" value="1"/>
</dbReference>
<dbReference type="PROSITE" id="PS00331">
    <property type="entry name" value="MALIC_ENZYMES"/>
    <property type="match status" value="1"/>
</dbReference>
<evidence type="ECO:0000250" key="1"/>
<evidence type="ECO:0000256" key="2">
    <source>
        <dbReference type="SAM" id="MobiDB-lite"/>
    </source>
</evidence>
<evidence type="ECO:0000269" key="3">
    <source>
    </source>
</evidence>
<evidence type="ECO:0000269" key="4">
    <source>
    </source>
</evidence>
<evidence type="ECO:0000305" key="5"/>
<evidence type="ECO:0007744" key="6">
    <source>
    </source>
</evidence>
<accession>Q9LYG3</accession>
<accession>B9DHM4</accession>
<accession>B9DHW2</accession>